<accession>P44735</accession>
<reference key="1">
    <citation type="journal article" date="1995" name="Science">
        <title>Whole-genome random sequencing and assembly of Haemophilus influenzae Rd.</title>
        <authorList>
            <person name="Fleischmann R.D."/>
            <person name="Adams M.D."/>
            <person name="White O."/>
            <person name="Clayton R.A."/>
            <person name="Kirkness E.F."/>
            <person name="Kerlavage A.R."/>
            <person name="Bult C.J."/>
            <person name="Tomb J.-F."/>
            <person name="Dougherty B.A."/>
            <person name="Merrick J.M."/>
            <person name="McKenney K."/>
            <person name="Sutton G.G."/>
            <person name="FitzHugh W."/>
            <person name="Fields C.A."/>
            <person name="Gocayne J.D."/>
            <person name="Scott J.D."/>
            <person name="Shirley R."/>
            <person name="Liu L.-I."/>
            <person name="Glodek A."/>
            <person name="Kelley J.M."/>
            <person name="Weidman J.F."/>
            <person name="Phillips C.A."/>
            <person name="Spriggs T."/>
            <person name="Hedblom E."/>
            <person name="Cotton M.D."/>
            <person name="Utterback T.R."/>
            <person name="Hanna M.C."/>
            <person name="Nguyen D.T."/>
            <person name="Saudek D.M."/>
            <person name="Brandon R.C."/>
            <person name="Fine L.D."/>
            <person name="Fritchman J.L."/>
            <person name="Fuhrmann J.L."/>
            <person name="Geoghagen N.S.M."/>
            <person name="Gnehm C.L."/>
            <person name="McDonald L.A."/>
            <person name="Small K.V."/>
            <person name="Fraser C.M."/>
            <person name="Smith H.O."/>
            <person name="Venter J.C."/>
        </authorList>
    </citation>
    <scope>NUCLEOTIDE SEQUENCE [LARGE SCALE GENOMIC DNA]</scope>
    <source>
        <strain>ATCC 51907 / DSM 11121 / KW20 / Rd</strain>
    </source>
</reference>
<protein>
    <recommendedName>
        <fullName evidence="1">Ribose import ATP-binding protein RbsA</fullName>
        <ecNumber evidence="1">7.5.2.7</ecNumber>
    </recommendedName>
</protein>
<evidence type="ECO:0000255" key="1">
    <source>
        <dbReference type="HAMAP-Rule" id="MF_01716"/>
    </source>
</evidence>
<dbReference type="EC" id="7.5.2.7" evidence="1"/>
<dbReference type="EMBL" id="L42023">
    <property type="protein sequence ID" value="AAC22160.1"/>
    <property type="molecule type" value="Genomic_DNA"/>
</dbReference>
<dbReference type="PIR" id="H64072">
    <property type="entry name" value="H64072"/>
</dbReference>
<dbReference type="RefSeq" id="NP_438660.1">
    <property type="nucleotide sequence ID" value="NC_000907.1"/>
</dbReference>
<dbReference type="SMR" id="P44735"/>
<dbReference type="STRING" id="71421.HI_0502"/>
<dbReference type="DNASU" id="950602"/>
<dbReference type="EnsemblBacteria" id="AAC22160">
    <property type="protein sequence ID" value="AAC22160"/>
    <property type="gene ID" value="HI_0502"/>
</dbReference>
<dbReference type="KEGG" id="hin:HI_0502"/>
<dbReference type="PATRIC" id="fig|71421.8.peg.521"/>
<dbReference type="eggNOG" id="COG1129">
    <property type="taxonomic scope" value="Bacteria"/>
</dbReference>
<dbReference type="HOGENOM" id="CLU_000604_92_3_6"/>
<dbReference type="OrthoDB" id="9776369at2"/>
<dbReference type="PhylomeDB" id="P44735"/>
<dbReference type="BioCyc" id="HINF71421:G1GJ1-515-MONOMER"/>
<dbReference type="Proteomes" id="UP000000579">
    <property type="component" value="Chromosome"/>
</dbReference>
<dbReference type="GO" id="GO:0005886">
    <property type="term" value="C:plasma membrane"/>
    <property type="evidence" value="ECO:0007669"/>
    <property type="project" value="UniProtKB-SubCell"/>
</dbReference>
<dbReference type="GO" id="GO:0015611">
    <property type="term" value="F:ABC-type D-ribose transporter activity"/>
    <property type="evidence" value="ECO:0007669"/>
    <property type="project" value="UniProtKB-EC"/>
</dbReference>
<dbReference type="GO" id="GO:0005524">
    <property type="term" value="F:ATP binding"/>
    <property type="evidence" value="ECO:0007669"/>
    <property type="project" value="UniProtKB-KW"/>
</dbReference>
<dbReference type="GO" id="GO:0016887">
    <property type="term" value="F:ATP hydrolysis activity"/>
    <property type="evidence" value="ECO:0007669"/>
    <property type="project" value="InterPro"/>
</dbReference>
<dbReference type="CDD" id="cd03216">
    <property type="entry name" value="ABC_Carb_Monos_I"/>
    <property type="match status" value="1"/>
</dbReference>
<dbReference type="CDD" id="cd03215">
    <property type="entry name" value="ABC_Carb_Monos_II"/>
    <property type="match status" value="1"/>
</dbReference>
<dbReference type="FunFam" id="3.40.50.300:FF:000126">
    <property type="entry name" value="Galactose/methyl galactoside import ATP-binding protein MglA"/>
    <property type="match status" value="1"/>
</dbReference>
<dbReference type="FunFam" id="3.40.50.300:FF:000127">
    <property type="entry name" value="Ribose import ATP-binding protein RbsA"/>
    <property type="match status" value="1"/>
</dbReference>
<dbReference type="Gene3D" id="3.40.50.300">
    <property type="entry name" value="P-loop containing nucleotide triphosphate hydrolases"/>
    <property type="match status" value="2"/>
</dbReference>
<dbReference type="InterPro" id="IPR003593">
    <property type="entry name" value="AAA+_ATPase"/>
</dbReference>
<dbReference type="InterPro" id="IPR050107">
    <property type="entry name" value="ABC_carbohydrate_import_ATPase"/>
</dbReference>
<dbReference type="InterPro" id="IPR003439">
    <property type="entry name" value="ABC_transporter-like_ATP-bd"/>
</dbReference>
<dbReference type="InterPro" id="IPR017871">
    <property type="entry name" value="ABC_transporter-like_CS"/>
</dbReference>
<dbReference type="InterPro" id="IPR027417">
    <property type="entry name" value="P-loop_NTPase"/>
</dbReference>
<dbReference type="NCBIfam" id="NF008030">
    <property type="entry name" value="PRK10762.1"/>
    <property type="match status" value="1"/>
</dbReference>
<dbReference type="PANTHER" id="PTHR43790">
    <property type="entry name" value="CARBOHYDRATE TRANSPORT ATP-BINDING PROTEIN MG119-RELATED"/>
    <property type="match status" value="1"/>
</dbReference>
<dbReference type="PANTHER" id="PTHR43790:SF3">
    <property type="entry name" value="D-ALLOSE IMPORT ATP-BINDING PROTEIN ALSA-RELATED"/>
    <property type="match status" value="1"/>
</dbReference>
<dbReference type="Pfam" id="PF00005">
    <property type="entry name" value="ABC_tran"/>
    <property type="match status" value="2"/>
</dbReference>
<dbReference type="SMART" id="SM00382">
    <property type="entry name" value="AAA"/>
    <property type="match status" value="2"/>
</dbReference>
<dbReference type="SUPFAM" id="SSF52540">
    <property type="entry name" value="P-loop containing nucleoside triphosphate hydrolases"/>
    <property type="match status" value="2"/>
</dbReference>
<dbReference type="PROSITE" id="PS00211">
    <property type="entry name" value="ABC_TRANSPORTER_1"/>
    <property type="match status" value="1"/>
</dbReference>
<dbReference type="PROSITE" id="PS50893">
    <property type="entry name" value="ABC_TRANSPORTER_2"/>
    <property type="match status" value="2"/>
</dbReference>
<dbReference type="PROSITE" id="PS51254">
    <property type="entry name" value="RBSA"/>
    <property type="match status" value="1"/>
</dbReference>
<organism>
    <name type="scientific">Haemophilus influenzae (strain ATCC 51907 / DSM 11121 / KW20 / Rd)</name>
    <dbReference type="NCBI Taxonomy" id="71421"/>
    <lineage>
        <taxon>Bacteria</taxon>
        <taxon>Pseudomonadati</taxon>
        <taxon>Pseudomonadota</taxon>
        <taxon>Gammaproteobacteria</taxon>
        <taxon>Pasteurellales</taxon>
        <taxon>Pasteurellaceae</taxon>
        <taxon>Haemophilus</taxon>
    </lineage>
</organism>
<proteinExistence type="inferred from homology"/>
<name>RBSA_HAEIN</name>
<comment type="function">
    <text evidence="1">Part of the ABC transporter complex RbsABC involved in ribose import. Responsible for energy coupling to the transport system.</text>
</comment>
<comment type="catalytic activity">
    <reaction evidence="1">
        <text>D-ribose(out) + ATP + H2O = D-ribose(in) + ADP + phosphate + H(+)</text>
        <dbReference type="Rhea" id="RHEA:29903"/>
        <dbReference type="ChEBI" id="CHEBI:15377"/>
        <dbReference type="ChEBI" id="CHEBI:15378"/>
        <dbReference type="ChEBI" id="CHEBI:30616"/>
        <dbReference type="ChEBI" id="CHEBI:43474"/>
        <dbReference type="ChEBI" id="CHEBI:47013"/>
        <dbReference type="ChEBI" id="CHEBI:456216"/>
        <dbReference type="EC" id="7.5.2.7"/>
    </reaction>
</comment>
<comment type="subunit">
    <text evidence="1">The complex is composed of an ATP-binding protein (RbsA), two transmembrane proteins (RbsC) and a solute-binding protein (RbsB).</text>
</comment>
<comment type="subcellular location">
    <subcellularLocation>
        <location evidence="1">Cell inner membrane</location>
        <topology evidence="1">Peripheral membrane protein</topology>
    </subcellularLocation>
</comment>
<comment type="similarity">
    <text evidence="1">Belongs to the ABC transporter superfamily. Ribose importer (TC 3.A.1.2.1) family.</text>
</comment>
<gene>
    <name evidence="1" type="primary">rbsA</name>
    <name type="ordered locus">HI_0502</name>
</gene>
<sequence>METLLKISGVDKSFPGVKALNNACLSVYAGRVMALMGENGAGKSTLMKVLTGIYSKDAGTIEYLNRSVNFNGPKASQEAGISIIHQELNLVGNLTIAENIFLGREFKTSWGAINWQKMHQEADKLLARLGVTHSSKQLCAELSIGEQQMVEIAKALSFESKVIIMDEPTDALTDTETEALFNVIRELKAENRGIVYISHRLKEIFQICDDVTVLRDGQFIGERVMAEITEDDLIEMMVGRRLDEQYPHLSQEKGECVLDVKHVSGSGIDDVSFKLHAGEIVGVSGLMGAGRTELGKLLYGALPKTAGKVRLKNQEIENRSPQDGLDNGIVYISEDRKGDGLVLGMSVKENMSLTSLDHFSQKGGIRHQAEKMAVDDFILMFNIKTPNRDQQVGLLSGGNQQKVAIARGLMTRPNVLILDEPTRGVDVGAKKEIYQLINEFKKEGLSILMISSDMPEVLGMSDRVLVMREGKISAEFSREEATQEKLLAAAIGK</sequence>
<keyword id="KW-0067">ATP-binding</keyword>
<keyword id="KW-0997">Cell inner membrane</keyword>
<keyword id="KW-1003">Cell membrane</keyword>
<keyword id="KW-0472">Membrane</keyword>
<keyword id="KW-0547">Nucleotide-binding</keyword>
<keyword id="KW-1185">Reference proteome</keyword>
<keyword id="KW-0677">Repeat</keyword>
<keyword id="KW-0762">Sugar transport</keyword>
<keyword id="KW-1278">Translocase</keyword>
<keyword id="KW-0813">Transport</keyword>
<feature type="chain" id="PRO_0000092957" description="Ribose import ATP-binding protein RbsA">
    <location>
        <begin position="1"/>
        <end position="493"/>
    </location>
</feature>
<feature type="domain" description="ABC transporter 1" evidence="1">
    <location>
        <begin position="5"/>
        <end position="241"/>
    </location>
</feature>
<feature type="domain" description="ABC transporter 2" evidence="1">
    <location>
        <begin position="252"/>
        <end position="491"/>
    </location>
</feature>
<feature type="binding site" evidence="1">
    <location>
        <begin position="37"/>
        <end position="44"/>
    </location>
    <ligand>
        <name>ATP</name>
        <dbReference type="ChEBI" id="CHEBI:30616"/>
    </ligand>
</feature>